<feature type="signal peptide" evidence="1">
    <location>
        <begin position="1"/>
        <end position="21"/>
    </location>
</feature>
<feature type="propeptide" id="PRO_0000017542">
    <location>
        <begin position="22"/>
        <end position="33"/>
    </location>
</feature>
<feature type="chain" id="PRO_0000017543" description="Hemolymph lipopolysaccharide-binding protein">
    <location>
        <begin position="34"/>
        <end position="256"/>
    </location>
</feature>
<feature type="domain" description="C-type lectin" evidence="2">
    <location>
        <begin position="146"/>
        <end position="256"/>
    </location>
</feature>
<feature type="glycosylation site" description="N-linked (GlcNAc...) asparagine" evidence="3">
    <location>
        <position position="56"/>
    </location>
</feature>
<feature type="disulfide bond" evidence="2">
    <location>
        <begin position="148"/>
        <end position="252"/>
    </location>
</feature>
<feature type="disulfide bond" evidence="2">
    <location>
        <begin position="230"/>
        <end position="244"/>
    </location>
</feature>
<name>LPSBP_PERAM</name>
<organism>
    <name type="scientific">Periplaneta americana</name>
    <name type="common">American cockroach</name>
    <name type="synonym">Blatta americana</name>
    <dbReference type="NCBI Taxonomy" id="6978"/>
    <lineage>
        <taxon>Eukaryota</taxon>
        <taxon>Metazoa</taxon>
        <taxon>Ecdysozoa</taxon>
        <taxon>Arthropoda</taxon>
        <taxon>Hexapoda</taxon>
        <taxon>Insecta</taxon>
        <taxon>Pterygota</taxon>
        <taxon>Neoptera</taxon>
        <taxon>Polyneoptera</taxon>
        <taxon>Dictyoptera</taxon>
        <taxon>Blattodea</taxon>
        <taxon>Blattoidea</taxon>
        <taxon>Blattidae</taxon>
        <taxon>Blattinae</taxon>
        <taxon>Periplaneta</taxon>
    </lineage>
</organism>
<accession>P26305</accession>
<protein>
    <recommendedName>
        <fullName>Hemolymph lipopolysaccharide-binding protein</fullName>
        <shortName>LPS-BP</shortName>
        <shortName>LPS-binding protein</shortName>
    </recommendedName>
</protein>
<proteinExistence type="evidence at protein level"/>
<evidence type="ECO:0000255" key="1"/>
<evidence type="ECO:0000255" key="2">
    <source>
        <dbReference type="PROSITE-ProRule" id="PRU00040"/>
    </source>
</evidence>
<evidence type="ECO:0000305" key="3"/>
<dbReference type="EMBL" id="D00711">
    <property type="protein sequence ID" value="BAA00616.1"/>
    <property type="molecule type" value="mRNA"/>
</dbReference>
<dbReference type="PIR" id="A39873">
    <property type="entry name" value="JQ0708"/>
</dbReference>
<dbReference type="SMR" id="P26305"/>
<dbReference type="GO" id="GO:0005576">
    <property type="term" value="C:extracellular region"/>
    <property type="evidence" value="ECO:0007669"/>
    <property type="project" value="UniProtKB-SubCell"/>
</dbReference>
<dbReference type="GO" id="GO:0030246">
    <property type="term" value="F:carbohydrate binding"/>
    <property type="evidence" value="ECO:0007669"/>
    <property type="project" value="UniProtKB-KW"/>
</dbReference>
<dbReference type="CDD" id="cd00037">
    <property type="entry name" value="CLECT"/>
    <property type="match status" value="1"/>
</dbReference>
<dbReference type="Gene3D" id="3.10.100.10">
    <property type="entry name" value="Mannose-Binding Protein A, subunit A"/>
    <property type="match status" value="1"/>
</dbReference>
<dbReference type="InterPro" id="IPR001304">
    <property type="entry name" value="C-type_lectin-like"/>
</dbReference>
<dbReference type="InterPro" id="IPR016186">
    <property type="entry name" value="C-type_lectin-like/link_sf"/>
</dbReference>
<dbReference type="InterPro" id="IPR050111">
    <property type="entry name" value="C-type_lectin/snaclec_domain"/>
</dbReference>
<dbReference type="InterPro" id="IPR018378">
    <property type="entry name" value="C-type_lectin_CS"/>
</dbReference>
<dbReference type="InterPro" id="IPR016187">
    <property type="entry name" value="CTDL_fold"/>
</dbReference>
<dbReference type="PANTHER" id="PTHR22803">
    <property type="entry name" value="MANNOSE, PHOSPHOLIPASE, LECTIN RECEPTOR RELATED"/>
    <property type="match status" value="1"/>
</dbReference>
<dbReference type="Pfam" id="PF00059">
    <property type="entry name" value="Lectin_C"/>
    <property type="match status" value="1"/>
</dbReference>
<dbReference type="SMART" id="SM00034">
    <property type="entry name" value="CLECT"/>
    <property type="match status" value="1"/>
</dbReference>
<dbReference type="SUPFAM" id="SSF56436">
    <property type="entry name" value="C-type lectin-like"/>
    <property type="match status" value="1"/>
</dbReference>
<dbReference type="PROSITE" id="PS00615">
    <property type="entry name" value="C_TYPE_LECTIN_1"/>
    <property type="match status" value="1"/>
</dbReference>
<dbReference type="PROSITE" id="PS50041">
    <property type="entry name" value="C_TYPE_LECTIN_2"/>
    <property type="match status" value="1"/>
</dbReference>
<reference key="1">
    <citation type="journal article" date="1991" name="J. Biol. Chem.">
        <title>Molecular cloning of cDNA for lipopolysaccharide-binding protein from the hemolymph of the American cockroach, Periplaneta americana. Similarity of the protein with animal lectins and its acute phase expression.</title>
        <authorList>
            <person name="Jomori T."/>
            <person name="Natori S."/>
        </authorList>
    </citation>
    <scope>NUCLEOTIDE SEQUENCE [MRNA]</scope>
    <scope>PARTIAL PROTEIN SEQUENCE</scope>
    <source>
        <tissue>Hemolymph</tissue>
    </source>
</reference>
<keyword id="KW-0106">Calcium</keyword>
<keyword id="KW-0903">Direct protein sequencing</keyword>
<keyword id="KW-1015">Disulfide bond</keyword>
<keyword id="KW-0325">Glycoprotein</keyword>
<keyword id="KW-0430">Lectin</keyword>
<keyword id="KW-0964">Secreted</keyword>
<keyword id="KW-0732">Signal</keyword>
<comment type="function">
    <text>Participates probably in the elimination of foreign substances invading the insect abdominal cavity, and in trapping intracellular symbionts, when they leak from the mycetomes into the hemolymph.</text>
</comment>
<comment type="subcellular location">
    <subcellularLocation>
        <location>Secreted</location>
    </subcellularLocation>
</comment>
<comment type="tissue specificity">
    <text>Hemolymph.</text>
</comment>
<comment type="induction">
    <text>By introduction of foreign cells into the abdominal cavity of adult P.americana.</text>
</comment>
<comment type="miscellaneous">
    <text>Calcium is required for lipopolysaccharide binding.</text>
</comment>
<sequence length="256" mass="28420">MMNTRALLPLSVLLMATLCLCELPIPILQRFVRSVPEECPIADPSDFKFSITSNRNKTGHWTAQVRLEHGEHEQSGSNQHNRDLWQVDLEQTTTTCAGVKSVQIITTITAPPPTAAPSIPPGYELSAVLGYYKFHKTPKTWDEARIICQQEGGHLVIINSEDESKVLQNLFSKVTKTEGATNNDYIFIGIHDRFVEGEFITIFGKPLATTGFTRWVDSIQPDNAGGNENCGSMHPNGGLNDIPCPWKLPFVCEVEL</sequence>